<reference key="1">
    <citation type="journal article" date="2002" name="Nature">
        <title>Comparison of the genomes of two Xanthomonas pathogens with differing host specificities.</title>
        <authorList>
            <person name="da Silva A.C.R."/>
            <person name="Ferro J.A."/>
            <person name="Reinach F.C."/>
            <person name="Farah C.S."/>
            <person name="Furlan L.R."/>
            <person name="Quaggio R.B."/>
            <person name="Monteiro-Vitorello C.B."/>
            <person name="Van Sluys M.A."/>
            <person name="Almeida N.F. Jr."/>
            <person name="Alves L.M.C."/>
            <person name="do Amaral A.M."/>
            <person name="Bertolini M.C."/>
            <person name="Camargo L.E.A."/>
            <person name="Camarotte G."/>
            <person name="Cannavan F."/>
            <person name="Cardozo J."/>
            <person name="Chambergo F."/>
            <person name="Ciapina L.P."/>
            <person name="Cicarelli R.M.B."/>
            <person name="Coutinho L.L."/>
            <person name="Cursino-Santos J.R."/>
            <person name="El-Dorry H."/>
            <person name="Faria J.B."/>
            <person name="Ferreira A.J.S."/>
            <person name="Ferreira R.C.C."/>
            <person name="Ferro M.I.T."/>
            <person name="Formighieri E.F."/>
            <person name="Franco M.C."/>
            <person name="Greggio C.C."/>
            <person name="Gruber A."/>
            <person name="Katsuyama A.M."/>
            <person name="Kishi L.T."/>
            <person name="Leite R.P."/>
            <person name="Lemos E.G.M."/>
            <person name="Lemos M.V.F."/>
            <person name="Locali E.C."/>
            <person name="Machado M.A."/>
            <person name="Madeira A.M.B.N."/>
            <person name="Martinez-Rossi N.M."/>
            <person name="Martins E.C."/>
            <person name="Meidanis J."/>
            <person name="Menck C.F.M."/>
            <person name="Miyaki C.Y."/>
            <person name="Moon D.H."/>
            <person name="Moreira L.M."/>
            <person name="Novo M.T.M."/>
            <person name="Okura V.K."/>
            <person name="Oliveira M.C."/>
            <person name="Oliveira V.R."/>
            <person name="Pereira H.A."/>
            <person name="Rossi A."/>
            <person name="Sena J.A.D."/>
            <person name="Silva C."/>
            <person name="de Souza R.F."/>
            <person name="Spinola L.A.F."/>
            <person name="Takita M.A."/>
            <person name="Tamura R.E."/>
            <person name="Teixeira E.C."/>
            <person name="Tezza R.I.D."/>
            <person name="Trindade dos Santos M."/>
            <person name="Truffi D."/>
            <person name="Tsai S.M."/>
            <person name="White F.F."/>
            <person name="Setubal J.C."/>
            <person name="Kitajima J.P."/>
        </authorList>
    </citation>
    <scope>NUCLEOTIDE SEQUENCE [LARGE SCALE GENOMIC DNA]</scope>
    <source>
        <strain>306</strain>
    </source>
</reference>
<sequence length="215" mass="24252">MTPFTRHTGLVAPLDRANVDTDQIIPKQFLKSIKRTGFGPNLFDEWRYLDIGEPGRDNSTRPLNPEFVLNFPRYQGASVLLARENFGCGSSREHAPWALDEYGFRTVIAPSFADIFYNNSFKNGLLPIVLAEAQVDALFEQCLTTEGYQLTVDLAAQRVRRPDGVEYGFDIDAFRKHCLLNGLDDIGLTLQDADAIGRFEQGHRARQPWLFGALQ</sequence>
<organism>
    <name type="scientific">Xanthomonas axonopodis pv. citri (strain 306)</name>
    <dbReference type="NCBI Taxonomy" id="190486"/>
    <lineage>
        <taxon>Bacteria</taxon>
        <taxon>Pseudomonadati</taxon>
        <taxon>Pseudomonadota</taxon>
        <taxon>Gammaproteobacteria</taxon>
        <taxon>Lysobacterales</taxon>
        <taxon>Lysobacteraceae</taxon>
        <taxon>Xanthomonas</taxon>
    </lineage>
</organism>
<dbReference type="EC" id="4.2.1.33" evidence="1"/>
<dbReference type="EMBL" id="AE008923">
    <property type="protein sequence ID" value="AAM38300.1"/>
    <property type="molecule type" value="Genomic_DNA"/>
</dbReference>
<dbReference type="RefSeq" id="WP_011052292.1">
    <property type="nucleotide sequence ID" value="NC_003919.1"/>
</dbReference>
<dbReference type="SMR" id="Q8PH04"/>
<dbReference type="GeneID" id="66912500"/>
<dbReference type="KEGG" id="xac:XAC3457"/>
<dbReference type="eggNOG" id="COG0066">
    <property type="taxonomic scope" value="Bacteria"/>
</dbReference>
<dbReference type="HOGENOM" id="CLU_081378_0_3_6"/>
<dbReference type="UniPathway" id="UPA00048">
    <property type="reaction ID" value="UER00071"/>
</dbReference>
<dbReference type="Proteomes" id="UP000000576">
    <property type="component" value="Chromosome"/>
</dbReference>
<dbReference type="GO" id="GO:0009316">
    <property type="term" value="C:3-isopropylmalate dehydratase complex"/>
    <property type="evidence" value="ECO:0007669"/>
    <property type="project" value="InterPro"/>
</dbReference>
<dbReference type="GO" id="GO:0003861">
    <property type="term" value="F:3-isopropylmalate dehydratase activity"/>
    <property type="evidence" value="ECO:0007669"/>
    <property type="project" value="UniProtKB-UniRule"/>
</dbReference>
<dbReference type="GO" id="GO:0009098">
    <property type="term" value="P:L-leucine biosynthetic process"/>
    <property type="evidence" value="ECO:0007669"/>
    <property type="project" value="UniProtKB-UniRule"/>
</dbReference>
<dbReference type="CDD" id="cd01577">
    <property type="entry name" value="IPMI_Swivel"/>
    <property type="match status" value="1"/>
</dbReference>
<dbReference type="FunFam" id="3.20.19.10:FF:000003">
    <property type="entry name" value="3-isopropylmalate dehydratase small subunit"/>
    <property type="match status" value="1"/>
</dbReference>
<dbReference type="Gene3D" id="3.20.19.10">
    <property type="entry name" value="Aconitase, domain 4"/>
    <property type="match status" value="1"/>
</dbReference>
<dbReference type="HAMAP" id="MF_01031">
    <property type="entry name" value="LeuD_type1"/>
    <property type="match status" value="1"/>
</dbReference>
<dbReference type="InterPro" id="IPR004431">
    <property type="entry name" value="3-IsopropMal_deHydase_ssu"/>
</dbReference>
<dbReference type="InterPro" id="IPR015928">
    <property type="entry name" value="Aconitase/3IPM_dehydase_swvl"/>
</dbReference>
<dbReference type="InterPro" id="IPR000573">
    <property type="entry name" value="AconitaseA/IPMdHydase_ssu_swvl"/>
</dbReference>
<dbReference type="InterPro" id="IPR033940">
    <property type="entry name" value="IPMI_Swivel"/>
</dbReference>
<dbReference type="InterPro" id="IPR050075">
    <property type="entry name" value="LeuD"/>
</dbReference>
<dbReference type="NCBIfam" id="TIGR00171">
    <property type="entry name" value="leuD"/>
    <property type="match status" value="1"/>
</dbReference>
<dbReference type="NCBIfam" id="NF002458">
    <property type="entry name" value="PRK01641.1"/>
    <property type="match status" value="1"/>
</dbReference>
<dbReference type="PANTHER" id="PTHR43345:SF5">
    <property type="entry name" value="3-ISOPROPYLMALATE DEHYDRATASE SMALL SUBUNIT"/>
    <property type="match status" value="1"/>
</dbReference>
<dbReference type="PANTHER" id="PTHR43345">
    <property type="entry name" value="3-ISOPROPYLMALATE DEHYDRATASE SMALL SUBUNIT 2-RELATED-RELATED"/>
    <property type="match status" value="1"/>
</dbReference>
<dbReference type="Pfam" id="PF00694">
    <property type="entry name" value="Aconitase_C"/>
    <property type="match status" value="1"/>
</dbReference>
<dbReference type="SUPFAM" id="SSF52016">
    <property type="entry name" value="LeuD/IlvD-like"/>
    <property type="match status" value="1"/>
</dbReference>
<evidence type="ECO:0000255" key="1">
    <source>
        <dbReference type="HAMAP-Rule" id="MF_01031"/>
    </source>
</evidence>
<gene>
    <name evidence="1" type="primary">leuD</name>
    <name type="ordered locus">XAC3457</name>
</gene>
<protein>
    <recommendedName>
        <fullName evidence="1">3-isopropylmalate dehydratase small subunit</fullName>
        <ecNumber evidence="1">4.2.1.33</ecNumber>
    </recommendedName>
    <alternativeName>
        <fullName evidence="1">Alpha-IPM isomerase</fullName>
        <shortName evidence="1">IPMI</shortName>
    </alternativeName>
    <alternativeName>
        <fullName evidence="1">Isopropylmalate isomerase</fullName>
    </alternativeName>
</protein>
<proteinExistence type="inferred from homology"/>
<feature type="chain" id="PRO_0000141910" description="3-isopropylmalate dehydratase small subunit">
    <location>
        <begin position="1"/>
        <end position="215"/>
    </location>
</feature>
<accession>Q8PH04</accession>
<keyword id="KW-0028">Amino-acid biosynthesis</keyword>
<keyword id="KW-0100">Branched-chain amino acid biosynthesis</keyword>
<keyword id="KW-0432">Leucine biosynthesis</keyword>
<keyword id="KW-0456">Lyase</keyword>
<name>LEUD_XANAC</name>
<comment type="function">
    <text evidence="1">Catalyzes the isomerization between 2-isopropylmalate and 3-isopropylmalate, via the formation of 2-isopropylmaleate.</text>
</comment>
<comment type="catalytic activity">
    <reaction evidence="1">
        <text>(2R,3S)-3-isopropylmalate = (2S)-2-isopropylmalate</text>
        <dbReference type="Rhea" id="RHEA:32287"/>
        <dbReference type="ChEBI" id="CHEBI:1178"/>
        <dbReference type="ChEBI" id="CHEBI:35121"/>
        <dbReference type="EC" id="4.2.1.33"/>
    </reaction>
</comment>
<comment type="pathway">
    <text evidence="1">Amino-acid biosynthesis; L-leucine biosynthesis; L-leucine from 3-methyl-2-oxobutanoate: step 2/4.</text>
</comment>
<comment type="subunit">
    <text evidence="1">Heterodimer of LeuC and LeuD.</text>
</comment>
<comment type="similarity">
    <text evidence="1">Belongs to the LeuD family. LeuD type 1 subfamily.</text>
</comment>